<keyword id="KW-0025">Alternative splicing</keyword>
<keyword id="KW-1003">Cell membrane</keyword>
<keyword id="KW-0472">Membrane</keyword>
<keyword id="KW-1185">Reference proteome</keyword>
<keyword id="KW-0812">Transmembrane</keyword>
<keyword id="KW-1133">Transmembrane helix</keyword>
<keyword id="KW-0813">Transport</keyword>
<keyword id="KW-0926">Vacuole</keyword>
<sequence>MAEEYAECLLEKNFHEDCSGCKVDQMKRLRRGFPFWELFTVWIIVLCTALPISSLFPFLYFMIDDFNIAKKEEDIGFYAGFVGCSFMLGRAFTSVAWGLVADRYGRKPVILIGTASVVVFNTLFGLSLNFWMAIITRFCLGSFNGLLGPIKAYAMEIFRDEYQGLALSAVSTAWGIGLIIGPAIGGFLAQPAKQYPSLFSQDSIFGKFPFFLPCLAISVFAFLVTIVSSRIPETLHNHKFNDDESYDALKDLSDDPESNKVAERNGKSSLLNNWPLISSIIVYCVFSLHDMAYTEIFSLWANSPRKYGGLGYSTADVGSVLAFSGFGLLIFQLSLYSYAERLLGPIIVTRISGSLAMVVLSCYPLIAKLSGLALTVTVTSASVAKSVLGTSAITGLFILQNKAVRQDQRGAANGIAMTAMSLFKAIGPAAAGIIFSWSEKRQGAAFLPGTQMVFFILNVVLALGVVLTFKPFLAETQQ</sequence>
<feature type="chain" id="PRO_0000400081" description="Protein ZINC INDUCED FACILITATOR-LIKE 1">
    <location>
        <begin position="1"/>
        <end position="478"/>
    </location>
</feature>
<feature type="transmembrane region" description="Helical" evidence="1">
    <location>
        <begin position="43"/>
        <end position="63"/>
    </location>
</feature>
<feature type="transmembrane region" description="Helical" evidence="1">
    <location>
        <begin position="81"/>
        <end position="101"/>
    </location>
</feature>
<feature type="transmembrane region" description="Helical" evidence="1">
    <location>
        <begin position="108"/>
        <end position="128"/>
    </location>
</feature>
<feature type="transmembrane region" description="Helical" evidence="1">
    <location>
        <begin position="130"/>
        <end position="150"/>
    </location>
</feature>
<feature type="transmembrane region" description="Helical" evidence="1">
    <location>
        <begin position="169"/>
        <end position="189"/>
    </location>
</feature>
<feature type="transmembrane region" description="Helical" evidence="1">
    <location>
        <begin position="208"/>
        <end position="228"/>
    </location>
</feature>
<feature type="transmembrane region" description="Helical" evidence="1">
    <location>
        <begin position="280"/>
        <end position="300"/>
    </location>
</feature>
<feature type="transmembrane region" description="Helical" evidence="1">
    <location>
        <begin position="317"/>
        <end position="337"/>
    </location>
</feature>
<feature type="transmembrane region" description="Helical" evidence="1">
    <location>
        <begin position="346"/>
        <end position="367"/>
    </location>
</feature>
<feature type="transmembrane region" description="Helical" evidence="1">
    <location>
        <begin position="378"/>
        <end position="398"/>
    </location>
</feature>
<feature type="transmembrane region" description="Helical" evidence="1">
    <location>
        <begin position="415"/>
        <end position="435"/>
    </location>
</feature>
<feature type="transmembrane region" description="Helical" evidence="1">
    <location>
        <begin position="453"/>
        <end position="473"/>
    </location>
</feature>
<feature type="splice variant" id="VSP_039992" description="In isoform 2." evidence="6">
    <location>
        <begin position="1"/>
        <end position="86"/>
    </location>
</feature>
<feature type="splice variant" id="VSP_039993" description="In isoform 4." evidence="5">
    <original>TSA</original>
    <variation>VSF</variation>
    <location>
        <begin position="390"/>
        <end position="392"/>
    </location>
</feature>
<feature type="splice variant" id="VSP_039994" description="In isoform 4." evidence="5">
    <location>
        <begin position="393"/>
        <end position="478"/>
    </location>
</feature>
<feature type="splice variant" id="VSP_039995" description="In isoform 3." evidence="7">
    <original>RQDQRGA</original>
    <variation>TRPKRSS</variation>
    <location>
        <begin position="405"/>
        <end position="411"/>
    </location>
</feature>
<feature type="splice variant" id="VSP_039996" description="In isoform 3." evidence="7">
    <location>
        <begin position="412"/>
        <end position="478"/>
    </location>
</feature>
<feature type="sequence conflict" description="In Ref. 5; AAM63809." evidence="7" ref="5">
    <original>A</original>
    <variation>V</variation>
    <location>
        <position position="373"/>
    </location>
</feature>
<feature type="sequence conflict" description="In Ref. 4; BAH56812." evidence="7" ref="4">
    <original>T</original>
    <variation>I</variation>
    <location>
        <position position="379"/>
    </location>
</feature>
<gene>
    <name type="primary">ZIFL1</name>
    <name type="ordered locus">At5g13750</name>
    <name type="ORF">MXE10.2</name>
</gene>
<dbReference type="EMBL" id="AB011484">
    <property type="protein sequence ID" value="BAB10596.1"/>
    <property type="status" value="ALT_SEQ"/>
    <property type="molecule type" value="Genomic_DNA"/>
</dbReference>
<dbReference type="EMBL" id="CP002688">
    <property type="protein sequence ID" value="AED91935.1"/>
    <property type="molecule type" value="Genomic_DNA"/>
</dbReference>
<dbReference type="EMBL" id="CP002688">
    <property type="protein sequence ID" value="AED91936.1"/>
    <property type="molecule type" value="Genomic_DNA"/>
</dbReference>
<dbReference type="EMBL" id="CP002688">
    <property type="protein sequence ID" value="AED91937.1"/>
    <property type="molecule type" value="Genomic_DNA"/>
</dbReference>
<dbReference type="EMBL" id="CP002688">
    <property type="protein sequence ID" value="ANM68710.1"/>
    <property type="molecule type" value="Genomic_DNA"/>
</dbReference>
<dbReference type="EMBL" id="AY039542">
    <property type="protein sequence ID" value="AAK62597.1"/>
    <property type="molecule type" value="mRNA"/>
</dbReference>
<dbReference type="EMBL" id="AY062867">
    <property type="protein sequence ID" value="AAL32945.1"/>
    <property type="molecule type" value="mRNA"/>
</dbReference>
<dbReference type="EMBL" id="AY102150">
    <property type="protein sequence ID" value="AAM26717.1"/>
    <property type="molecule type" value="mRNA"/>
</dbReference>
<dbReference type="EMBL" id="AK318697">
    <property type="protein sequence ID" value="BAH56812.1"/>
    <property type="molecule type" value="mRNA"/>
</dbReference>
<dbReference type="EMBL" id="AY086758">
    <property type="protein sequence ID" value="AAM63809.1"/>
    <property type="molecule type" value="mRNA"/>
</dbReference>
<dbReference type="EMBL" id="AK221880">
    <property type="protein sequence ID" value="BAD94202.1"/>
    <property type="status" value="ALT_INIT"/>
    <property type="molecule type" value="mRNA"/>
</dbReference>
<dbReference type="RefSeq" id="NP_001031877.1">
    <molecule id="Q94BZ1-3"/>
    <property type="nucleotide sequence ID" value="NM_001036800.2"/>
</dbReference>
<dbReference type="RefSeq" id="NP_001318556.1">
    <molecule id="Q94BZ1-3"/>
    <property type="nucleotide sequence ID" value="NM_001343292.1"/>
</dbReference>
<dbReference type="RefSeq" id="NP_568290.3">
    <molecule id="Q94BZ1-2"/>
    <property type="nucleotide sequence ID" value="NM_121378.5"/>
</dbReference>
<dbReference type="RefSeq" id="NP_851036.1">
    <molecule id="Q94BZ1-1"/>
    <property type="nucleotide sequence ID" value="NM_180705.3"/>
</dbReference>
<dbReference type="SMR" id="Q94BZ1"/>
<dbReference type="FunCoup" id="Q94BZ1">
    <property type="interactions" value="1374"/>
</dbReference>
<dbReference type="STRING" id="3702.Q94BZ1"/>
<dbReference type="TCDB" id="2.A.1.2.111">
    <property type="family name" value="the major facilitator superfamily (mfs)"/>
</dbReference>
<dbReference type="iPTMnet" id="Q94BZ1"/>
<dbReference type="PaxDb" id="3702-AT5G13750.1"/>
<dbReference type="ProteomicsDB" id="232332">
    <molecule id="Q94BZ1-1"/>
</dbReference>
<dbReference type="EnsemblPlants" id="AT5G13750.1">
    <molecule id="Q94BZ1-1"/>
    <property type="protein sequence ID" value="AT5G13750.1"/>
    <property type="gene ID" value="AT5G13750"/>
</dbReference>
<dbReference type="EnsemblPlants" id="AT5G13750.2">
    <molecule id="Q94BZ1-2"/>
    <property type="protein sequence ID" value="AT5G13750.2"/>
    <property type="gene ID" value="AT5G13750"/>
</dbReference>
<dbReference type="EnsemblPlants" id="AT5G13750.3">
    <molecule id="Q94BZ1-3"/>
    <property type="protein sequence ID" value="AT5G13750.3"/>
    <property type="gene ID" value="AT5G13750"/>
</dbReference>
<dbReference type="EnsemblPlants" id="AT5G13750.4">
    <molecule id="Q94BZ1-3"/>
    <property type="protein sequence ID" value="AT5G13750.4"/>
    <property type="gene ID" value="AT5G13750"/>
</dbReference>
<dbReference type="GeneID" id="831220"/>
<dbReference type="Gramene" id="AT5G13750.1">
    <molecule id="Q94BZ1-1"/>
    <property type="protein sequence ID" value="AT5G13750.1"/>
    <property type="gene ID" value="AT5G13750"/>
</dbReference>
<dbReference type="Gramene" id="AT5G13750.2">
    <molecule id="Q94BZ1-2"/>
    <property type="protein sequence ID" value="AT5G13750.2"/>
    <property type="gene ID" value="AT5G13750"/>
</dbReference>
<dbReference type="Gramene" id="AT5G13750.3">
    <molecule id="Q94BZ1-3"/>
    <property type="protein sequence ID" value="AT5G13750.3"/>
    <property type="gene ID" value="AT5G13750"/>
</dbReference>
<dbReference type="Gramene" id="AT5G13750.4">
    <molecule id="Q94BZ1-3"/>
    <property type="protein sequence ID" value="AT5G13750.4"/>
    <property type="gene ID" value="AT5G13750"/>
</dbReference>
<dbReference type="KEGG" id="ath:AT5G13750"/>
<dbReference type="Araport" id="AT5G13750"/>
<dbReference type="TAIR" id="AT5G13750">
    <property type="gene designation" value="ZIFL1"/>
</dbReference>
<dbReference type="eggNOG" id="KOG2615">
    <property type="taxonomic scope" value="Eukaryota"/>
</dbReference>
<dbReference type="InParanoid" id="Q94BZ1"/>
<dbReference type="OMA" id="PWKELQP"/>
<dbReference type="PhylomeDB" id="Q94BZ1"/>
<dbReference type="PRO" id="PR:Q94BZ1"/>
<dbReference type="Proteomes" id="UP000006548">
    <property type="component" value="Chromosome 5"/>
</dbReference>
<dbReference type="ExpressionAtlas" id="Q94BZ1">
    <property type="expression patterns" value="baseline and differential"/>
</dbReference>
<dbReference type="GO" id="GO:0009705">
    <property type="term" value="C:plant-type vacuole membrane"/>
    <property type="evidence" value="ECO:0000314"/>
    <property type="project" value="TAIR"/>
</dbReference>
<dbReference type="GO" id="GO:0005886">
    <property type="term" value="C:plasma membrane"/>
    <property type="evidence" value="ECO:0000314"/>
    <property type="project" value="TAIR"/>
</dbReference>
<dbReference type="GO" id="GO:0022821">
    <property type="term" value="F:solute:potassium antiporter activity"/>
    <property type="evidence" value="ECO:0000316"/>
    <property type="project" value="TAIR"/>
</dbReference>
<dbReference type="GO" id="GO:0010540">
    <property type="term" value="P:basipetal auxin transport"/>
    <property type="evidence" value="ECO:0000314"/>
    <property type="project" value="TAIR"/>
</dbReference>
<dbReference type="GO" id="GO:0009630">
    <property type="term" value="P:gravitropism"/>
    <property type="evidence" value="ECO:0000315"/>
    <property type="project" value="TAIR"/>
</dbReference>
<dbReference type="GO" id="GO:0090333">
    <property type="term" value="P:regulation of stomatal closure"/>
    <property type="evidence" value="ECO:0000315"/>
    <property type="project" value="TAIR"/>
</dbReference>
<dbReference type="GO" id="GO:0009414">
    <property type="term" value="P:response to water deprivation"/>
    <property type="evidence" value="ECO:0000315"/>
    <property type="project" value="TAIR"/>
</dbReference>
<dbReference type="GO" id="GO:0048364">
    <property type="term" value="P:root development"/>
    <property type="evidence" value="ECO:0000315"/>
    <property type="project" value="TAIR"/>
</dbReference>
<dbReference type="CDD" id="cd17330">
    <property type="entry name" value="MFS_SLC46_TetA_like"/>
    <property type="match status" value="1"/>
</dbReference>
<dbReference type="FunFam" id="1.20.1250.20:FF:000301">
    <property type="entry name" value="Protein ZINC INDUCED FACILITATOR-LIKE 1"/>
    <property type="match status" value="1"/>
</dbReference>
<dbReference type="Gene3D" id="1.20.1250.20">
    <property type="entry name" value="MFS general substrate transporter like domains"/>
    <property type="match status" value="1"/>
</dbReference>
<dbReference type="InterPro" id="IPR011701">
    <property type="entry name" value="MFS"/>
</dbReference>
<dbReference type="InterPro" id="IPR020846">
    <property type="entry name" value="MFS_dom"/>
</dbReference>
<dbReference type="InterPro" id="IPR036259">
    <property type="entry name" value="MFS_trans_sf"/>
</dbReference>
<dbReference type="InterPro" id="IPR001958">
    <property type="entry name" value="Tet-R_TetA/multi-R_MdtG-like"/>
</dbReference>
<dbReference type="PANTHER" id="PTHR23504">
    <property type="entry name" value="MAJOR FACILITATOR SUPERFAMILY DOMAIN-CONTAINING PROTEIN 10"/>
    <property type="match status" value="1"/>
</dbReference>
<dbReference type="PANTHER" id="PTHR23504:SF114">
    <property type="entry name" value="PROTEIN ZINC INDUCED FACILITATOR-LIKE 1"/>
    <property type="match status" value="1"/>
</dbReference>
<dbReference type="Pfam" id="PF07690">
    <property type="entry name" value="MFS_1"/>
    <property type="match status" value="1"/>
</dbReference>
<dbReference type="PRINTS" id="PR01035">
    <property type="entry name" value="TCRTETA"/>
</dbReference>
<dbReference type="SUPFAM" id="SSF103473">
    <property type="entry name" value="MFS general substrate transporter"/>
    <property type="match status" value="1"/>
</dbReference>
<dbReference type="PROSITE" id="PS50850">
    <property type="entry name" value="MFS"/>
    <property type="match status" value="1"/>
</dbReference>
<organism>
    <name type="scientific">Arabidopsis thaliana</name>
    <name type="common">Mouse-ear cress</name>
    <dbReference type="NCBI Taxonomy" id="3702"/>
    <lineage>
        <taxon>Eukaryota</taxon>
        <taxon>Viridiplantae</taxon>
        <taxon>Streptophyta</taxon>
        <taxon>Embryophyta</taxon>
        <taxon>Tracheophyta</taxon>
        <taxon>Spermatophyta</taxon>
        <taxon>Magnoliopsida</taxon>
        <taxon>eudicotyledons</taxon>
        <taxon>Gunneridae</taxon>
        <taxon>Pentapetalae</taxon>
        <taxon>rosids</taxon>
        <taxon>malvids</taxon>
        <taxon>Brassicales</taxon>
        <taxon>Brassicaceae</taxon>
        <taxon>Camelineae</taxon>
        <taxon>Arabidopsis</taxon>
    </lineage>
</organism>
<reference key="1">
    <citation type="journal article" date="1998" name="DNA Res.">
        <title>Structural analysis of Arabidopsis thaliana chromosome 5. V. Sequence features of the regions of 1,381,565 bp covered by twenty one physically assigned P1 and TAC clones.</title>
        <authorList>
            <person name="Kaneko T."/>
            <person name="Kotani H."/>
            <person name="Nakamura Y."/>
            <person name="Sato S."/>
            <person name="Asamizu E."/>
            <person name="Miyajima N."/>
            <person name="Tabata S."/>
        </authorList>
    </citation>
    <scope>NUCLEOTIDE SEQUENCE [LARGE SCALE GENOMIC DNA]</scope>
    <source>
        <strain>cv. Columbia</strain>
    </source>
</reference>
<reference key="2">
    <citation type="journal article" date="2017" name="Plant J.">
        <title>Araport11: a complete reannotation of the Arabidopsis thaliana reference genome.</title>
        <authorList>
            <person name="Cheng C.Y."/>
            <person name="Krishnakumar V."/>
            <person name="Chan A.P."/>
            <person name="Thibaud-Nissen F."/>
            <person name="Schobel S."/>
            <person name="Town C.D."/>
        </authorList>
    </citation>
    <scope>GENOME REANNOTATION</scope>
    <source>
        <strain>cv. Columbia</strain>
    </source>
</reference>
<reference key="3">
    <citation type="journal article" date="2003" name="Science">
        <title>Empirical analysis of transcriptional activity in the Arabidopsis genome.</title>
        <authorList>
            <person name="Yamada K."/>
            <person name="Lim J."/>
            <person name="Dale J.M."/>
            <person name="Chen H."/>
            <person name="Shinn P."/>
            <person name="Palm C.J."/>
            <person name="Southwick A.M."/>
            <person name="Wu H.C."/>
            <person name="Kim C.J."/>
            <person name="Nguyen M."/>
            <person name="Pham P.K."/>
            <person name="Cheuk R.F."/>
            <person name="Karlin-Newmann G."/>
            <person name="Liu S.X."/>
            <person name="Lam B."/>
            <person name="Sakano H."/>
            <person name="Wu T."/>
            <person name="Yu G."/>
            <person name="Miranda M."/>
            <person name="Quach H.L."/>
            <person name="Tripp M."/>
            <person name="Chang C.H."/>
            <person name="Lee J.M."/>
            <person name="Toriumi M.J."/>
            <person name="Chan M.M."/>
            <person name="Tang C.C."/>
            <person name="Onodera C.S."/>
            <person name="Deng J.M."/>
            <person name="Akiyama K."/>
            <person name="Ansari Y."/>
            <person name="Arakawa T."/>
            <person name="Banh J."/>
            <person name="Banno F."/>
            <person name="Bowser L."/>
            <person name="Brooks S.Y."/>
            <person name="Carninci P."/>
            <person name="Chao Q."/>
            <person name="Choy N."/>
            <person name="Enju A."/>
            <person name="Goldsmith A.D."/>
            <person name="Gurjal M."/>
            <person name="Hansen N.F."/>
            <person name="Hayashizaki Y."/>
            <person name="Johnson-Hopson C."/>
            <person name="Hsuan V.W."/>
            <person name="Iida K."/>
            <person name="Karnes M."/>
            <person name="Khan S."/>
            <person name="Koesema E."/>
            <person name="Ishida J."/>
            <person name="Jiang P.X."/>
            <person name="Jones T."/>
            <person name="Kawai J."/>
            <person name="Kamiya A."/>
            <person name="Meyers C."/>
            <person name="Nakajima M."/>
            <person name="Narusaka M."/>
            <person name="Seki M."/>
            <person name="Sakurai T."/>
            <person name="Satou M."/>
            <person name="Tamse R."/>
            <person name="Vaysberg M."/>
            <person name="Wallender E.K."/>
            <person name="Wong C."/>
            <person name="Yamamura Y."/>
            <person name="Yuan S."/>
            <person name="Shinozaki K."/>
            <person name="Davis R.W."/>
            <person name="Theologis A."/>
            <person name="Ecker J.R."/>
        </authorList>
    </citation>
    <scope>NUCLEOTIDE SEQUENCE [LARGE SCALE MRNA] (ISOFORM 1)</scope>
    <source>
        <strain>cv. Columbia</strain>
    </source>
</reference>
<reference key="4">
    <citation type="journal article" date="2009" name="DNA Res.">
        <title>Analysis of multiple occurrences of alternative splicing events in Arabidopsis thaliana using novel sequenced full-length cDNAs.</title>
        <authorList>
            <person name="Iida K."/>
            <person name="Fukami-Kobayashi K."/>
            <person name="Toyoda A."/>
            <person name="Sakaki Y."/>
            <person name="Kobayashi M."/>
            <person name="Seki M."/>
            <person name="Shinozaki K."/>
        </authorList>
    </citation>
    <scope>NUCLEOTIDE SEQUENCE [LARGE SCALE MRNA] (ISOFORM 4)</scope>
    <source>
        <strain>cv. Columbia</strain>
    </source>
</reference>
<reference key="5">
    <citation type="submission" date="2002-03" db="EMBL/GenBank/DDBJ databases">
        <title>Full-length cDNA from Arabidopsis thaliana.</title>
        <authorList>
            <person name="Brover V.V."/>
            <person name="Troukhan M.E."/>
            <person name="Alexandrov N.A."/>
            <person name="Lu Y.-P."/>
            <person name="Flavell R.B."/>
            <person name="Feldmann K.A."/>
        </authorList>
    </citation>
    <scope>NUCLEOTIDE SEQUENCE [LARGE SCALE MRNA] (ISOFORM 2)</scope>
</reference>
<reference key="6">
    <citation type="submission" date="2005-03" db="EMBL/GenBank/DDBJ databases">
        <title>Large-scale analysis of RIKEN Arabidopsis full-length (RAFL) cDNAs.</title>
        <authorList>
            <person name="Totoki Y."/>
            <person name="Seki M."/>
            <person name="Ishida J."/>
            <person name="Nakajima M."/>
            <person name="Enju A."/>
            <person name="Kamiya A."/>
            <person name="Narusaka M."/>
            <person name="Shin-i T."/>
            <person name="Nakagawa M."/>
            <person name="Sakamoto N."/>
            <person name="Oishi K."/>
            <person name="Kohara Y."/>
            <person name="Kobayashi M."/>
            <person name="Toyoda A."/>
            <person name="Sakaki Y."/>
            <person name="Sakurai T."/>
            <person name="Iida K."/>
            <person name="Akiyama K."/>
            <person name="Satou M."/>
            <person name="Toyoda T."/>
            <person name="Konagaya A."/>
            <person name="Carninci P."/>
            <person name="Kawai J."/>
            <person name="Hayashizaki Y."/>
            <person name="Shinozaki K."/>
        </authorList>
    </citation>
    <scope>NUCLEOTIDE SEQUENCE [LARGE SCALE MRNA] OF 331-478</scope>
    <source>
        <strain>cv. Columbia</strain>
    </source>
</reference>
<reference key="7">
    <citation type="journal article" date="2007" name="Plant Physiol.">
        <title>A novel major facilitator superfamily protein at the tonoplast influences zinc tolerance and accumulation in Arabidopsis.</title>
        <authorList>
            <person name="Haydon M.J."/>
            <person name="Cobbett C.S."/>
        </authorList>
    </citation>
    <scope>DISRUPTION PHENOTYPE</scope>
</reference>
<reference key="8">
    <citation type="journal article" date="2009" name="Appl. Microbiol. Biotechnol.">
        <title>Heterologous expression of a Tpo1 homolog from Arabidopsis thaliana confers resistance to the herbicide 2,4-D and other chemical stresses in yeast.</title>
        <authorList>
            <person name="Cabrito T.R."/>
            <person name="Teixeira M.C."/>
            <person name="Duarte A.A."/>
            <person name="Duque P."/>
            <person name="Sa-Correia I."/>
        </authorList>
    </citation>
    <scope>FUNCTION</scope>
    <scope>INDUCTION</scope>
    <scope>SUBCELLULAR LOCATION</scope>
</reference>
<reference key="9">
    <citation type="journal article" date="2013" name="Plant Cell">
        <title>A major facilitator superfamily transporter plays a dual role in polar auxin transport and drought stress tolerance in Arabidopsis.</title>
        <authorList>
            <person name="Remy E."/>
            <person name="Cabrito T.R."/>
            <person name="Baster P."/>
            <person name="Batista R.A."/>
            <person name="Teixeira M.C."/>
            <person name="Friml J."/>
            <person name="Sa-Correia I."/>
            <person name="Duque P."/>
        </authorList>
    </citation>
    <scope>FUNCTION (ISOFORMS 1 AND 3)</scope>
    <scope>SUBCELLULAR LOCATION (ISOFORMS 1 AND 3)</scope>
    <scope>TISSUE SPECIFICITY</scope>
    <scope>DEVELOPMENTAL STAGE</scope>
    <scope>DISRUPTION PHENOTYPE</scope>
</reference>
<name>ZIFL1_ARATH</name>
<evidence type="ECO:0000255" key="1"/>
<evidence type="ECO:0000269" key="2">
    <source>
    </source>
</evidence>
<evidence type="ECO:0000269" key="3">
    <source>
    </source>
</evidence>
<evidence type="ECO:0000269" key="4">
    <source>
    </source>
</evidence>
<evidence type="ECO:0000303" key="5">
    <source>
    </source>
</evidence>
<evidence type="ECO:0000303" key="6">
    <source ref="5"/>
</evidence>
<evidence type="ECO:0000305" key="7"/>
<accession>Q94BZ1</accession>
<accession>C0Z283</accession>
<accession>Q2V381</accession>
<accession>Q56WZ9</accession>
<accession>Q8LC71</accession>
<accession>Q9FKI7</accession>
<proteinExistence type="evidence at transcript level"/>
<protein>
    <recommendedName>
        <fullName>Protein ZINC INDUCED FACILITATOR-LIKE 1</fullName>
    </recommendedName>
    <alternativeName>
        <fullName>Protein ZIF-LIKE 1</fullName>
    </alternativeName>
</protein>
<comment type="function">
    <text evidence="3 4">Major facilitator superfamily (MFS) transporter probably involved in 2,4-dichlorophenoxyacetic acid (2,4-D) export (PubMed:19440702). K(+) may be the physiological substrate of the transporter (PubMed:23524662).</text>
</comment>
<comment type="function">
    <molecule>Isoform 1</molecule>
    <text evidence="4">Modulates root auxin-related processes. Involved in auxin efflux and acts as a positive regulator of shootward transport at the root apex. May mediate proton efflux from the vacuolar compartment.</text>
</comment>
<comment type="function">
    <molecule>Isoform 3</molecule>
    <text evidence="4">Mediates drought stress tolerance by regulating stomatal closure.</text>
</comment>
<comment type="subcellular location">
    <subcellularLocation>
        <location evidence="3">Cell membrane</location>
        <topology evidence="3">Multi-pass membrane protein</topology>
    </subcellularLocation>
</comment>
<comment type="subcellular location">
    <molecule>Isoform 1</molecule>
    <subcellularLocation>
        <location evidence="4">Vacuole membrane</location>
    </subcellularLocation>
</comment>
<comment type="subcellular location">
    <molecule>Isoform 3</molecule>
    <subcellularLocation>
        <location evidence="4">Cell membrane</location>
    </subcellularLocation>
</comment>
<comment type="alternative products">
    <event type="alternative splicing"/>
    <isoform>
        <id>Q94BZ1-1</id>
        <name>1</name>
        <sequence type="displayed"/>
    </isoform>
    <isoform>
        <id>Q94BZ1-2</id>
        <name>2</name>
        <sequence type="described" ref="VSP_039992"/>
    </isoform>
    <isoform>
        <id>Q94BZ1-3</id>
        <name>3</name>
        <sequence type="described" ref="VSP_039995 VSP_039996"/>
    </isoform>
    <isoform>
        <id>Q94BZ1-4</id>
        <name>4</name>
        <sequence type="described" ref="VSP_039993 VSP_039994"/>
    </isoform>
</comment>
<comment type="tissue specificity">
    <text evidence="4">Predominantly expressed in roots and stomatal guard cells. Detected in anther stamen filaments and shoot apical meristem. In the mature portion of roots, restricted to the cortex. At the root tip, highly expressed in both the cortical and epidermal cell layers of the apical meristem and the transition zone, while absent from the quiescent center or the columella cells. Not detected in lateral root primordia.</text>
</comment>
<comment type="developmental stage">
    <text evidence="4">Expressed throughout development.</text>
</comment>
<comment type="induction">
    <text evidence="3">By 2,4-D treatment.</text>
</comment>
<comment type="disruption phenotype">
    <text evidence="2 4">No visible phenotype when grown under normal conditions (PubMed:23524662). No visible phenotype when grown in presence of zinc (PubMed:17277087). Hypersensitivity to drought stress and auxin-related defects (PubMed:23524662).</text>
</comment>
<comment type="miscellaneous">
    <text>Heterologous expression of ZIFL1 in yeast leads to increased resistance to 2,4-dichlorophenoxyacetic acid (2,4-D), indole-3-acetic acid (IAA), aluminum and thallium. Not involved in zinc stress resistance.</text>
</comment>
<comment type="similarity">
    <text evidence="7">Belongs to the major facilitator superfamily.</text>
</comment>
<comment type="sequence caution" evidence="7">
    <conflict type="erroneous gene model prediction">
        <sequence resource="EMBL-CDS" id="BAB10596"/>
    </conflict>
</comment>
<comment type="sequence caution" evidence="7">
    <conflict type="erroneous initiation">
        <sequence resource="EMBL-CDS" id="BAD94202"/>
    </conflict>
    <text>Truncated N-terminus.</text>
</comment>